<gene>
    <name evidence="1" type="primary">argJ</name>
    <name type="ordered locus">stu0465</name>
</gene>
<dbReference type="EC" id="2.3.1.35" evidence="1"/>
<dbReference type="EC" id="2.3.1.1" evidence="1"/>
<dbReference type="EMBL" id="CP000023">
    <property type="protein sequence ID" value="AAV60175.1"/>
    <property type="molecule type" value="Genomic_DNA"/>
</dbReference>
<dbReference type="RefSeq" id="WP_011225582.1">
    <property type="nucleotide sequence ID" value="NC_006448.1"/>
</dbReference>
<dbReference type="SMR" id="Q5M5L0"/>
<dbReference type="STRING" id="264199.stu0465"/>
<dbReference type="MEROPS" id="T05.002"/>
<dbReference type="KEGG" id="stl:stu0465"/>
<dbReference type="PATRIC" id="fig|264199.4.peg.468"/>
<dbReference type="eggNOG" id="COG1364">
    <property type="taxonomic scope" value="Bacteria"/>
</dbReference>
<dbReference type="HOGENOM" id="CLU_027172_1_0_9"/>
<dbReference type="UniPathway" id="UPA00068">
    <property type="reaction ID" value="UER00106"/>
</dbReference>
<dbReference type="UniPathway" id="UPA00068">
    <property type="reaction ID" value="UER00111"/>
</dbReference>
<dbReference type="Proteomes" id="UP000001170">
    <property type="component" value="Chromosome"/>
</dbReference>
<dbReference type="GO" id="GO:0005737">
    <property type="term" value="C:cytoplasm"/>
    <property type="evidence" value="ECO:0007669"/>
    <property type="project" value="UniProtKB-SubCell"/>
</dbReference>
<dbReference type="GO" id="GO:0004358">
    <property type="term" value="F:glutamate N-acetyltransferase activity"/>
    <property type="evidence" value="ECO:0007669"/>
    <property type="project" value="UniProtKB-UniRule"/>
</dbReference>
<dbReference type="GO" id="GO:0004042">
    <property type="term" value="F:L-glutamate N-acetyltransferase activity"/>
    <property type="evidence" value="ECO:0007669"/>
    <property type="project" value="UniProtKB-UniRule"/>
</dbReference>
<dbReference type="GO" id="GO:0006526">
    <property type="term" value="P:L-arginine biosynthetic process"/>
    <property type="evidence" value="ECO:0007669"/>
    <property type="project" value="UniProtKB-UniRule"/>
</dbReference>
<dbReference type="GO" id="GO:0006592">
    <property type="term" value="P:ornithine biosynthetic process"/>
    <property type="evidence" value="ECO:0007669"/>
    <property type="project" value="TreeGrafter"/>
</dbReference>
<dbReference type="CDD" id="cd02152">
    <property type="entry name" value="OAT"/>
    <property type="match status" value="1"/>
</dbReference>
<dbReference type="FunFam" id="3.10.20.340:FF:000001">
    <property type="entry name" value="Arginine biosynthesis bifunctional protein ArgJ, chloroplastic"/>
    <property type="match status" value="1"/>
</dbReference>
<dbReference type="FunFam" id="3.60.70.12:FF:000001">
    <property type="entry name" value="Arginine biosynthesis bifunctional protein ArgJ, chloroplastic"/>
    <property type="match status" value="1"/>
</dbReference>
<dbReference type="Gene3D" id="3.10.20.340">
    <property type="entry name" value="ArgJ beta chain, C-terminal domain"/>
    <property type="match status" value="1"/>
</dbReference>
<dbReference type="Gene3D" id="3.60.70.12">
    <property type="entry name" value="L-amino peptidase D-ALA esterase/amidase"/>
    <property type="match status" value="1"/>
</dbReference>
<dbReference type="HAMAP" id="MF_01106">
    <property type="entry name" value="ArgJ"/>
    <property type="match status" value="1"/>
</dbReference>
<dbReference type="InterPro" id="IPR002813">
    <property type="entry name" value="Arg_biosynth_ArgJ"/>
</dbReference>
<dbReference type="InterPro" id="IPR016117">
    <property type="entry name" value="ArgJ-like_dom_sf"/>
</dbReference>
<dbReference type="InterPro" id="IPR042195">
    <property type="entry name" value="ArgJ_beta_C"/>
</dbReference>
<dbReference type="NCBIfam" id="TIGR00120">
    <property type="entry name" value="ArgJ"/>
    <property type="match status" value="1"/>
</dbReference>
<dbReference type="NCBIfam" id="NF003802">
    <property type="entry name" value="PRK05388.1"/>
    <property type="match status" value="1"/>
</dbReference>
<dbReference type="PANTHER" id="PTHR23100">
    <property type="entry name" value="ARGININE BIOSYNTHESIS BIFUNCTIONAL PROTEIN ARGJ"/>
    <property type="match status" value="1"/>
</dbReference>
<dbReference type="PANTHER" id="PTHR23100:SF0">
    <property type="entry name" value="ARGININE BIOSYNTHESIS BIFUNCTIONAL PROTEIN ARGJ, MITOCHONDRIAL"/>
    <property type="match status" value="1"/>
</dbReference>
<dbReference type="Pfam" id="PF01960">
    <property type="entry name" value="ArgJ"/>
    <property type="match status" value="1"/>
</dbReference>
<dbReference type="SUPFAM" id="SSF56266">
    <property type="entry name" value="DmpA/ArgJ-like"/>
    <property type="match status" value="1"/>
</dbReference>
<name>ARGJ_STRT2</name>
<protein>
    <recommendedName>
        <fullName evidence="1">Arginine biosynthesis bifunctional protein ArgJ</fullName>
    </recommendedName>
    <domain>
        <recommendedName>
            <fullName evidence="1">Glutamate N-acetyltransferase</fullName>
            <ecNumber evidence="1">2.3.1.35</ecNumber>
        </recommendedName>
        <alternativeName>
            <fullName evidence="1">Ornithine acetyltransferase</fullName>
            <shortName evidence="1">OATase</shortName>
        </alternativeName>
        <alternativeName>
            <fullName evidence="1">Ornithine transacetylase</fullName>
        </alternativeName>
    </domain>
    <domain>
        <recommendedName>
            <fullName evidence="1">Amino-acid acetyltransferase</fullName>
            <ecNumber evidence="1">2.3.1.1</ecNumber>
        </recommendedName>
        <alternativeName>
            <fullName evidence="1">N-acetylglutamate synthase</fullName>
            <shortName evidence="1">AGSase</shortName>
        </alternativeName>
    </domain>
    <component>
        <recommendedName>
            <fullName evidence="1">Arginine biosynthesis bifunctional protein ArgJ alpha chain</fullName>
        </recommendedName>
    </component>
    <component>
        <recommendedName>
            <fullName evidence="1">Arginine biosynthesis bifunctional protein ArgJ beta chain</fullName>
        </recommendedName>
    </component>
</protein>
<organism>
    <name type="scientific">Streptococcus thermophilus (strain ATCC BAA-250 / LMG 18311)</name>
    <dbReference type="NCBI Taxonomy" id="264199"/>
    <lineage>
        <taxon>Bacteria</taxon>
        <taxon>Bacillati</taxon>
        <taxon>Bacillota</taxon>
        <taxon>Bacilli</taxon>
        <taxon>Lactobacillales</taxon>
        <taxon>Streptococcaceae</taxon>
        <taxon>Streptococcus</taxon>
    </lineage>
</organism>
<sequence length="397" mass="42117">MKVIDGTIASPLGFSADGLHAGFKKRKMDFGWIVSEKPASVAGVYTTNKVIAAPLIVTKTSVKKAGKMRAIVVNSGVANSCTGTQGLEDAYTMQEWTAEKLGVEPDMIGVASTGIIGELLPMDTLKNGLSKLVVNGNANDFAKAILTTDTATKTIAVTETFGRDVVTMAGVAKGSGMIHPNMATMLGFITCDANISSDTLQLALSQNVEKTFNQITVDGDTSTNDMVLVMSNGCALNDEILPDTPEFDKFSKMLNFVMQELAKKIAKDGEGANKLIQVDVVNAPNALDARMMAKSVVGSSLVKTAIFGEDPNWGRILAAVGYAGVDVPVDNVDIMIGGLPVMLASSPVTFDDEEMKDIMHGDEVTITVDLHSGQEKGTAWGCDLSYDYVKINALYHT</sequence>
<reference key="1">
    <citation type="journal article" date="2004" name="Nat. Biotechnol.">
        <title>Complete sequence and comparative genome analysis of the dairy bacterium Streptococcus thermophilus.</title>
        <authorList>
            <person name="Bolotin A."/>
            <person name="Quinquis B."/>
            <person name="Renault P."/>
            <person name="Sorokin A."/>
            <person name="Ehrlich S.D."/>
            <person name="Kulakauskas S."/>
            <person name="Lapidus A."/>
            <person name="Goltsman E."/>
            <person name="Mazur M."/>
            <person name="Pusch G.D."/>
            <person name="Fonstein M."/>
            <person name="Overbeek R."/>
            <person name="Kyprides N."/>
            <person name="Purnelle B."/>
            <person name="Prozzi D."/>
            <person name="Ngui K."/>
            <person name="Masuy D."/>
            <person name="Hancy F."/>
            <person name="Burteau S."/>
            <person name="Boutry M."/>
            <person name="Delcour J."/>
            <person name="Goffeau A."/>
            <person name="Hols P."/>
        </authorList>
    </citation>
    <scope>NUCLEOTIDE SEQUENCE [LARGE SCALE GENOMIC DNA]</scope>
    <source>
        <strain>ATCC BAA-250 / LMG 18311</strain>
    </source>
</reference>
<feature type="chain" id="PRO_0000227260" description="Arginine biosynthesis bifunctional protein ArgJ alpha chain" evidence="1">
    <location>
        <begin position="1"/>
        <end position="183"/>
    </location>
</feature>
<feature type="chain" id="PRO_0000227261" description="Arginine biosynthesis bifunctional protein ArgJ beta chain" evidence="1">
    <location>
        <begin position="184"/>
        <end position="397"/>
    </location>
</feature>
<feature type="active site" description="Nucleophile" evidence="1">
    <location>
        <position position="184"/>
    </location>
</feature>
<feature type="binding site" evidence="1">
    <location>
        <position position="147"/>
    </location>
    <ligand>
        <name>substrate</name>
    </ligand>
</feature>
<feature type="binding site" evidence="1">
    <location>
        <position position="173"/>
    </location>
    <ligand>
        <name>substrate</name>
    </ligand>
</feature>
<feature type="binding site" evidence="1">
    <location>
        <position position="184"/>
    </location>
    <ligand>
        <name>substrate</name>
    </ligand>
</feature>
<feature type="binding site" evidence="1">
    <location>
        <position position="270"/>
    </location>
    <ligand>
        <name>substrate</name>
    </ligand>
</feature>
<feature type="binding site" evidence="1">
    <location>
        <position position="392"/>
    </location>
    <ligand>
        <name>substrate</name>
    </ligand>
</feature>
<feature type="binding site" evidence="1">
    <location>
        <position position="397"/>
    </location>
    <ligand>
        <name>substrate</name>
    </ligand>
</feature>
<feature type="site" description="Involved in the stabilization of negative charge on the oxyanion by the formation of the oxyanion hole" evidence="1">
    <location>
        <position position="113"/>
    </location>
</feature>
<feature type="site" description="Involved in the stabilization of negative charge on the oxyanion by the formation of the oxyanion hole" evidence="1">
    <location>
        <position position="114"/>
    </location>
</feature>
<feature type="site" description="Cleavage; by autolysis" evidence="1">
    <location>
        <begin position="183"/>
        <end position="184"/>
    </location>
</feature>
<evidence type="ECO:0000255" key="1">
    <source>
        <dbReference type="HAMAP-Rule" id="MF_01106"/>
    </source>
</evidence>
<comment type="function">
    <text evidence="1">Catalyzes two activities which are involved in the cyclic version of arginine biosynthesis: the synthesis of N-acetylglutamate from glutamate and acetyl-CoA as the acetyl donor, and of ornithine by transacetylation between N(2)-acetylornithine and glutamate.</text>
</comment>
<comment type="catalytic activity">
    <reaction evidence="1">
        <text>N(2)-acetyl-L-ornithine + L-glutamate = N-acetyl-L-glutamate + L-ornithine</text>
        <dbReference type="Rhea" id="RHEA:15349"/>
        <dbReference type="ChEBI" id="CHEBI:29985"/>
        <dbReference type="ChEBI" id="CHEBI:44337"/>
        <dbReference type="ChEBI" id="CHEBI:46911"/>
        <dbReference type="ChEBI" id="CHEBI:57805"/>
        <dbReference type="EC" id="2.3.1.35"/>
    </reaction>
</comment>
<comment type="catalytic activity">
    <reaction evidence="1">
        <text>L-glutamate + acetyl-CoA = N-acetyl-L-glutamate + CoA + H(+)</text>
        <dbReference type="Rhea" id="RHEA:24292"/>
        <dbReference type="ChEBI" id="CHEBI:15378"/>
        <dbReference type="ChEBI" id="CHEBI:29985"/>
        <dbReference type="ChEBI" id="CHEBI:44337"/>
        <dbReference type="ChEBI" id="CHEBI:57287"/>
        <dbReference type="ChEBI" id="CHEBI:57288"/>
        <dbReference type="EC" id="2.3.1.1"/>
    </reaction>
</comment>
<comment type="pathway">
    <text evidence="1">Amino-acid biosynthesis; L-arginine biosynthesis; L-ornithine and N-acetyl-L-glutamate from L-glutamate and N(2)-acetyl-L-ornithine (cyclic): step 1/1.</text>
</comment>
<comment type="pathway">
    <text evidence="1">Amino-acid biosynthesis; L-arginine biosynthesis; N(2)-acetyl-L-ornithine from L-glutamate: step 1/4.</text>
</comment>
<comment type="subunit">
    <text evidence="1">Heterotetramer of two alpha and two beta chains.</text>
</comment>
<comment type="subcellular location">
    <subcellularLocation>
        <location evidence="1">Cytoplasm</location>
    </subcellularLocation>
</comment>
<comment type="similarity">
    <text evidence="1">Belongs to the ArgJ family.</text>
</comment>
<accession>Q5M5L0</accession>
<proteinExistence type="inferred from homology"/>
<keyword id="KW-0012">Acyltransferase</keyword>
<keyword id="KW-0028">Amino-acid biosynthesis</keyword>
<keyword id="KW-0055">Arginine biosynthesis</keyword>
<keyword id="KW-0068">Autocatalytic cleavage</keyword>
<keyword id="KW-0963">Cytoplasm</keyword>
<keyword id="KW-0511">Multifunctional enzyme</keyword>
<keyword id="KW-1185">Reference proteome</keyword>
<keyword id="KW-0808">Transferase</keyword>